<feature type="chain" id="PRO_1000205361" description="Small ribosomal subunit protein bS21">
    <location>
        <begin position="1"/>
        <end position="71"/>
    </location>
</feature>
<feature type="region of interest" description="Disordered" evidence="2">
    <location>
        <begin position="48"/>
        <end position="71"/>
    </location>
</feature>
<feature type="compositionally biased region" description="Basic residues" evidence="2">
    <location>
        <begin position="48"/>
        <end position="59"/>
    </location>
</feature>
<feature type="compositionally biased region" description="Basic and acidic residues" evidence="2">
    <location>
        <begin position="60"/>
        <end position="71"/>
    </location>
</feature>
<sequence length="71" mass="8485">MPAVKVKENEPFDVALRRFKRSCEKAGVLAEVRSREFYEKPTAERKRKAAAAVKRHAKKVQREQRRRERLY</sequence>
<evidence type="ECO:0000255" key="1">
    <source>
        <dbReference type="HAMAP-Rule" id="MF_00358"/>
    </source>
</evidence>
<evidence type="ECO:0000256" key="2">
    <source>
        <dbReference type="SAM" id="MobiDB-lite"/>
    </source>
</evidence>
<evidence type="ECO:0000305" key="3"/>
<organism>
    <name type="scientific">Azotobacter vinelandii (strain DJ / ATCC BAA-1303)</name>
    <dbReference type="NCBI Taxonomy" id="322710"/>
    <lineage>
        <taxon>Bacteria</taxon>
        <taxon>Pseudomonadati</taxon>
        <taxon>Pseudomonadota</taxon>
        <taxon>Gammaproteobacteria</taxon>
        <taxon>Pseudomonadales</taxon>
        <taxon>Pseudomonadaceae</taxon>
        <taxon>Azotobacter</taxon>
    </lineage>
</organism>
<protein>
    <recommendedName>
        <fullName evidence="1">Small ribosomal subunit protein bS21</fullName>
    </recommendedName>
    <alternativeName>
        <fullName evidence="3">30S ribosomal protein S21</fullName>
    </alternativeName>
</protein>
<proteinExistence type="inferred from homology"/>
<dbReference type="EMBL" id="CP001157">
    <property type="protein sequence ID" value="ACO80803.1"/>
    <property type="molecule type" value="Genomic_DNA"/>
</dbReference>
<dbReference type="RefSeq" id="WP_003085057.1">
    <property type="nucleotide sequence ID" value="NZ_CP144736.1"/>
</dbReference>
<dbReference type="SMR" id="C1DIY4"/>
<dbReference type="STRING" id="322710.Avin_46980"/>
<dbReference type="EnsemblBacteria" id="ACO80803">
    <property type="protein sequence ID" value="ACO80803"/>
    <property type="gene ID" value="Avin_46980"/>
</dbReference>
<dbReference type="GeneID" id="88187573"/>
<dbReference type="KEGG" id="avn:Avin_46980"/>
<dbReference type="eggNOG" id="COG0828">
    <property type="taxonomic scope" value="Bacteria"/>
</dbReference>
<dbReference type="HOGENOM" id="CLU_159258_1_0_6"/>
<dbReference type="OrthoDB" id="9799244at2"/>
<dbReference type="Proteomes" id="UP000002424">
    <property type="component" value="Chromosome"/>
</dbReference>
<dbReference type="GO" id="GO:1990904">
    <property type="term" value="C:ribonucleoprotein complex"/>
    <property type="evidence" value="ECO:0007669"/>
    <property type="project" value="UniProtKB-KW"/>
</dbReference>
<dbReference type="GO" id="GO:0005840">
    <property type="term" value="C:ribosome"/>
    <property type="evidence" value="ECO:0007669"/>
    <property type="project" value="UniProtKB-KW"/>
</dbReference>
<dbReference type="GO" id="GO:0003735">
    <property type="term" value="F:structural constituent of ribosome"/>
    <property type="evidence" value="ECO:0007669"/>
    <property type="project" value="InterPro"/>
</dbReference>
<dbReference type="GO" id="GO:0006412">
    <property type="term" value="P:translation"/>
    <property type="evidence" value="ECO:0007669"/>
    <property type="project" value="UniProtKB-UniRule"/>
</dbReference>
<dbReference type="Gene3D" id="1.20.5.1150">
    <property type="entry name" value="Ribosomal protein S8"/>
    <property type="match status" value="1"/>
</dbReference>
<dbReference type="HAMAP" id="MF_00358">
    <property type="entry name" value="Ribosomal_bS21"/>
    <property type="match status" value="1"/>
</dbReference>
<dbReference type="InterPro" id="IPR001911">
    <property type="entry name" value="Ribosomal_bS21"/>
</dbReference>
<dbReference type="InterPro" id="IPR018278">
    <property type="entry name" value="Ribosomal_bS21_CS"/>
</dbReference>
<dbReference type="InterPro" id="IPR038380">
    <property type="entry name" value="Ribosomal_bS21_sf"/>
</dbReference>
<dbReference type="NCBIfam" id="TIGR00030">
    <property type="entry name" value="S21p"/>
    <property type="match status" value="1"/>
</dbReference>
<dbReference type="PANTHER" id="PTHR21109">
    <property type="entry name" value="MITOCHONDRIAL 28S RIBOSOMAL PROTEIN S21"/>
    <property type="match status" value="1"/>
</dbReference>
<dbReference type="PANTHER" id="PTHR21109:SF22">
    <property type="entry name" value="SMALL RIBOSOMAL SUBUNIT PROTEIN BS21"/>
    <property type="match status" value="1"/>
</dbReference>
<dbReference type="Pfam" id="PF01165">
    <property type="entry name" value="Ribosomal_S21"/>
    <property type="match status" value="1"/>
</dbReference>
<dbReference type="PRINTS" id="PR00976">
    <property type="entry name" value="RIBOSOMALS21"/>
</dbReference>
<dbReference type="PROSITE" id="PS01181">
    <property type="entry name" value="RIBOSOMAL_S21"/>
    <property type="match status" value="1"/>
</dbReference>
<keyword id="KW-0687">Ribonucleoprotein</keyword>
<keyword id="KW-0689">Ribosomal protein</keyword>
<name>RS21_AZOVD</name>
<gene>
    <name evidence="1" type="primary">rpsU</name>
    <name type="ordered locus">Avin_46980</name>
</gene>
<reference key="1">
    <citation type="journal article" date="2009" name="J. Bacteriol.">
        <title>Genome sequence of Azotobacter vinelandii, an obligate aerobe specialized to support diverse anaerobic metabolic processes.</title>
        <authorList>
            <person name="Setubal J.C."/>
            <person name="Dos Santos P."/>
            <person name="Goldman B.S."/>
            <person name="Ertesvaag H."/>
            <person name="Espin G."/>
            <person name="Rubio L.M."/>
            <person name="Valla S."/>
            <person name="Almeida N.F."/>
            <person name="Balasubramanian D."/>
            <person name="Cromes L."/>
            <person name="Curatti L."/>
            <person name="Du Z."/>
            <person name="Godsy E."/>
            <person name="Goodner B."/>
            <person name="Hellner-Burris K."/>
            <person name="Hernandez J.A."/>
            <person name="Houmiel K."/>
            <person name="Imperial J."/>
            <person name="Kennedy C."/>
            <person name="Larson T.J."/>
            <person name="Latreille P."/>
            <person name="Ligon L.S."/>
            <person name="Lu J."/>
            <person name="Maerk M."/>
            <person name="Miller N.M."/>
            <person name="Norton S."/>
            <person name="O'Carroll I.P."/>
            <person name="Paulsen I."/>
            <person name="Raulfs E.C."/>
            <person name="Roemer R."/>
            <person name="Rosser J."/>
            <person name="Segura D."/>
            <person name="Slater S."/>
            <person name="Stricklin S.L."/>
            <person name="Studholme D.J."/>
            <person name="Sun J."/>
            <person name="Viana C.J."/>
            <person name="Wallin E."/>
            <person name="Wang B."/>
            <person name="Wheeler C."/>
            <person name="Zhu H."/>
            <person name="Dean D.R."/>
            <person name="Dixon R."/>
            <person name="Wood D."/>
        </authorList>
    </citation>
    <scope>NUCLEOTIDE SEQUENCE [LARGE SCALE GENOMIC DNA]</scope>
    <source>
        <strain>DJ / ATCC BAA-1303</strain>
    </source>
</reference>
<accession>C1DIY4</accession>
<comment type="similarity">
    <text evidence="1">Belongs to the bacterial ribosomal protein bS21 family.</text>
</comment>